<keyword id="KW-0131">Cell cycle</keyword>
<keyword id="KW-0132">Cell division</keyword>
<keyword id="KW-0997">Cell inner membrane</keyword>
<keyword id="KW-1003">Cell membrane</keyword>
<keyword id="KW-0472">Membrane</keyword>
<keyword id="KW-0812">Transmembrane</keyword>
<keyword id="KW-1133">Transmembrane helix</keyword>
<name>ZIPA_YERPS</name>
<proteinExistence type="inferred from homology"/>
<organism>
    <name type="scientific">Yersinia pseudotuberculosis serotype I (strain IP32953)</name>
    <dbReference type="NCBI Taxonomy" id="273123"/>
    <lineage>
        <taxon>Bacteria</taxon>
        <taxon>Pseudomonadati</taxon>
        <taxon>Pseudomonadota</taxon>
        <taxon>Gammaproteobacteria</taxon>
        <taxon>Enterobacterales</taxon>
        <taxon>Yersiniaceae</taxon>
        <taxon>Yersinia</taxon>
    </lineage>
</organism>
<feature type="chain" id="PRO_0000214547" description="Cell division protein ZipA">
    <location>
        <begin position="1"/>
        <end position="328"/>
    </location>
</feature>
<feature type="topological domain" description="Periplasmic" evidence="1">
    <location>
        <begin position="1"/>
        <end position="6"/>
    </location>
</feature>
<feature type="transmembrane region" description="Helical" evidence="1">
    <location>
        <begin position="7"/>
        <end position="27"/>
    </location>
</feature>
<feature type="topological domain" description="Cytoplasmic" evidence="1">
    <location>
        <begin position="28"/>
        <end position="328"/>
    </location>
</feature>
<feature type="region of interest" description="Disordered" evidence="2">
    <location>
        <begin position="61"/>
        <end position="183"/>
    </location>
</feature>
<feature type="compositionally biased region" description="Basic and acidic residues" evidence="2">
    <location>
        <begin position="61"/>
        <end position="72"/>
    </location>
</feature>
<feature type="compositionally biased region" description="Polar residues" evidence="2">
    <location>
        <begin position="95"/>
        <end position="104"/>
    </location>
</feature>
<feature type="compositionally biased region" description="Polar residues" evidence="2">
    <location>
        <begin position="164"/>
        <end position="174"/>
    </location>
</feature>
<protein>
    <recommendedName>
        <fullName evidence="1">Cell division protein ZipA</fullName>
    </recommendedName>
</protein>
<reference key="1">
    <citation type="journal article" date="2004" name="Proc. Natl. Acad. Sci. U.S.A.">
        <title>Insights into the evolution of Yersinia pestis through whole-genome comparison with Yersinia pseudotuberculosis.</title>
        <authorList>
            <person name="Chain P.S.G."/>
            <person name="Carniel E."/>
            <person name="Larimer F.W."/>
            <person name="Lamerdin J."/>
            <person name="Stoutland P.O."/>
            <person name="Regala W.M."/>
            <person name="Georgescu A.M."/>
            <person name="Vergez L.M."/>
            <person name="Land M.L."/>
            <person name="Motin V.L."/>
            <person name="Brubaker R.R."/>
            <person name="Fowler J."/>
            <person name="Hinnebusch J."/>
            <person name="Marceau M."/>
            <person name="Medigue C."/>
            <person name="Simonet M."/>
            <person name="Chenal-Francisque V."/>
            <person name="Souza B."/>
            <person name="Dacheux D."/>
            <person name="Elliott J.M."/>
            <person name="Derbise A."/>
            <person name="Hauser L.J."/>
            <person name="Garcia E."/>
        </authorList>
    </citation>
    <scope>NUCLEOTIDE SEQUENCE [LARGE SCALE GENOMIC DNA]</scope>
    <source>
        <strain>IP32953</strain>
    </source>
</reference>
<sequence length="328" mass="36098">MMQDLRLILIVVGAIAIIALLLHGLWTSRKERSSLFRDRPVKRTKQERVETPIESLDEGVGEVRVRTSHPQEKPSFNHLDDDDDEVPVIQHAETKSAQVKTASRQAPFASVQTDYDDPLLGGLSAEQPPHDLSRDPLLGKADESYSQPQHAEPPHVEKPAHQVAPQQHVESQQEPVAPAPEAKPQKLKETVLVLHVAAHHGGVIGGEVLLQSVLQSGFQFGEMGIFHRHLSPAGSGPVLFSLANMVKPGSFDPDTMSDFSTPGVSMFMMVPSYGDANQNFKLMLQSAQRIADDVGGVVLDDERRMMTPQKLESYKARIREVLDANTIA</sequence>
<gene>
    <name evidence="1" type="primary">zipA</name>
    <name type="ordered locus">YPTB2712</name>
</gene>
<evidence type="ECO:0000255" key="1">
    <source>
        <dbReference type="HAMAP-Rule" id="MF_00509"/>
    </source>
</evidence>
<evidence type="ECO:0000256" key="2">
    <source>
        <dbReference type="SAM" id="MobiDB-lite"/>
    </source>
</evidence>
<dbReference type="EMBL" id="BX936398">
    <property type="protein sequence ID" value="CAH21950.1"/>
    <property type="molecule type" value="Genomic_DNA"/>
</dbReference>
<dbReference type="RefSeq" id="WP_002227089.1">
    <property type="nucleotide sequence ID" value="NZ_CP009712.1"/>
</dbReference>
<dbReference type="SMR" id="Q668M5"/>
<dbReference type="GeneID" id="57975708"/>
<dbReference type="KEGG" id="ypo:BZ17_3918"/>
<dbReference type="KEGG" id="yps:YPTB2712"/>
<dbReference type="PATRIC" id="fig|273123.14.peg.4119"/>
<dbReference type="Proteomes" id="UP000001011">
    <property type="component" value="Chromosome"/>
</dbReference>
<dbReference type="GO" id="GO:0032153">
    <property type="term" value="C:cell division site"/>
    <property type="evidence" value="ECO:0007669"/>
    <property type="project" value="UniProtKB-UniRule"/>
</dbReference>
<dbReference type="GO" id="GO:0005886">
    <property type="term" value="C:plasma membrane"/>
    <property type="evidence" value="ECO:0007669"/>
    <property type="project" value="UniProtKB-SubCell"/>
</dbReference>
<dbReference type="GO" id="GO:0000917">
    <property type="term" value="P:division septum assembly"/>
    <property type="evidence" value="ECO:0007669"/>
    <property type="project" value="TreeGrafter"/>
</dbReference>
<dbReference type="GO" id="GO:0043093">
    <property type="term" value="P:FtsZ-dependent cytokinesis"/>
    <property type="evidence" value="ECO:0007669"/>
    <property type="project" value="UniProtKB-UniRule"/>
</dbReference>
<dbReference type="CDD" id="cd00231">
    <property type="entry name" value="ZipA"/>
    <property type="match status" value="1"/>
</dbReference>
<dbReference type="FunFam" id="3.30.1400.10:FF:000001">
    <property type="entry name" value="Cell division protein ZipA"/>
    <property type="match status" value="1"/>
</dbReference>
<dbReference type="Gene3D" id="3.30.1400.10">
    <property type="entry name" value="ZipA, C-terminal FtsZ-binding domain"/>
    <property type="match status" value="1"/>
</dbReference>
<dbReference type="HAMAP" id="MF_00509">
    <property type="entry name" value="ZipA"/>
    <property type="match status" value="1"/>
</dbReference>
<dbReference type="InterPro" id="IPR011919">
    <property type="entry name" value="Cell_div_ZipA"/>
</dbReference>
<dbReference type="InterPro" id="IPR007449">
    <property type="entry name" value="ZipA_FtsZ-bd_C"/>
</dbReference>
<dbReference type="InterPro" id="IPR036765">
    <property type="entry name" value="ZipA_FtsZ-bd_C_sf"/>
</dbReference>
<dbReference type="NCBIfam" id="TIGR02205">
    <property type="entry name" value="septum_zipA"/>
    <property type="match status" value="1"/>
</dbReference>
<dbReference type="PANTHER" id="PTHR38685">
    <property type="entry name" value="CELL DIVISION PROTEIN ZIPA"/>
    <property type="match status" value="1"/>
</dbReference>
<dbReference type="PANTHER" id="PTHR38685:SF1">
    <property type="entry name" value="CELL DIVISION PROTEIN ZIPA"/>
    <property type="match status" value="1"/>
</dbReference>
<dbReference type="Pfam" id="PF04354">
    <property type="entry name" value="ZipA_C"/>
    <property type="match status" value="1"/>
</dbReference>
<dbReference type="SMART" id="SM00771">
    <property type="entry name" value="ZipA_C"/>
    <property type="match status" value="1"/>
</dbReference>
<dbReference type="SUPFAM" id="SSF64383">
    <property type="entry name" value="Cell-division protein ZipA, C-terminal domain"/>
    <property type="match status" value="1"/>
</dbReference>
<accession>Q668M5</accession>
<comment type="function">
    <text evidence="1">Essential cell division protein that stabilizes the FtsZ protofilaments by cross-linking them and that serves as a cytoplasmic membrane anchor for the Z ring. Also required for the recruitment to the septal ring of downstream cell division proteins.</text>
</comment>
<comment type="subunit">
    <text evidence="1">Interacts with FtsZ via their C-terminal domains.</text>
</comment>
<comment type="subcellular location">
    <subcellularLocation>
        <location evidence="1">Cell inner membrane</location>
        <topology evidence="1">Single-pass type I membrane protein</topology>
    </subcellularLocation>
    <text evidence="1">Localizes to the Z ring in an FtsZ-dependent manner.</text>
</comment>
<comment type="similarity">
    <text evidence="1">Belongs to the ZipA family.</text>
</comment>